<gene>
    <name type="primary">CYCD5-2</name>
    <name type="ordered locus">Os12g0588800</name>
    <name type="ordered locus">LOC_Os12g39830</name>
</gene>
<reference key="1">
    <citation type="journal article" date="2005" name="BMC Biol.">
        <title>The sequence of rice chromosomes 11 and 12, rich in disease resistance genes and recent gene duplications.</title>
        <authorList>
            <consortium name="The rice chromosomes 11 and 12 sequencing consortia"/>
        </authorList>
    </citation>
    <scope>NUCLEOTIDE SEQUENCE [LARGE SCALE GENOMIC DNA]</scope>
    <source>
        <strain>cv. Nipponbare</strain>
    </source>
</reference>
<reference key="2">
    <citation type="journal article" date="2005" name="Nature">
        <title>The map-based sequence of the rice genome.</title>
        <authorList>
            <consortium name="International rice genome sequencing project (IRGSP)"/>
        </authorList>
    </citation>
    <scope>NUCLEOTIDE SEQUENCE [LARGE SCALE GENOMIC DNA]</scope>
    <source>
        <strain>cv. Nipponbare</strain>
    </source>
</reference>
<reference key="3">
    <citation type="journal article" date="2008" name="Nucleic Acids Res.">
        <title>The rice annotation project database (RAP-DB): 2008 update.</title>
        <authorList>
            <consortium name="The rice annotation project (RAP)"/>
        </authorList>
    </citation>
    <scope>GENOME REANNOTATION</scope>
    <source>
        <strain>cv. Nipponbare</strain>
    </source>
</reference>
<reference key="4">
    <citation type="journal article" date="2013" name="Rice">
        <title>Improvement of the Oryza sativa Nipponbare reference genome using next generation sequence and optical map data.</title>
        <authorList>
            <person name="Kawahara Y."/>
            <person name="de la Bastide M."/>
            <person name="Hamilton J.P."/>
            <person name="Kanamori H."/>
            <person name="McCombie W.R."/>
            <person name="Ouyang S."/>
            <person name="Schwartz D.C."/>
            <person name="Tanaka T."/>
            <person name="Wu J."/>
            <person name="Zhou S."/>
            <person name="Childs K.L."/>
            <person name="Davidson R.M."/>
            <person name="Lin H."/>
            <person name="Quesada-Ocampo L."/>
            <person name="Vaillancourt B."/>
            <person name="Sakai H."/>
            <person name="Lee S.S."/>
            <person name="Kim J."/>
            <person name="Numa H."/>
            <person name="Itoh T."/>
            <person name="Buell C.R."/>
            <person name="Matsumoto T."/>
        </authorList>
    </citation>
    <scope>GENOME REANNOTATION</scope>
    <source>
        <strain>cv. Nipponbare</strain>
    </source>
</reference>
<reference key="5">
    <citation type="journal article" date="2003" name="Science">
        <title>Collection, mapping, and annotation of over 28,000 cDNA clones from japonica rice.</title>
        <authorList>
            <consortium name="The rice full-length cDNA consortium"/>
        </authorList>
    </citation>
    <scope>NUCLEOTIDE SEQUENCE [LARGE SCALE MRNA]</scope>
    <source>
        <strain>cv. Nipponbare</strain>
    </source>
</reference>
<reference key="6">
    <citation type="journal article" date="2006" name="Mol. Genet. Genomics">
        <title>Genome-wide analysis of cyclin family in rice (Oryza sativa L.).</title>
        <authorList>
            <person name="La H."/>
            <person name="Li J."/>
            <person name="Ji Z."/>
            <person name="Cheng Y."/>
            <person name="Li X."/>
            <person name="Jiang S."/>
            <person name="Venkatesh P.N."/>
            <person name="Ramachandran S."/>
        </authorList>
    </citation>
    <scope>GENE FAMILY</scope>
    <scope>NOMENCLATURE</scope>
</reference>
<organism>
    <name type="scientific">Oryza sativa subsp. japonica</name>
    <name type="common">Rice</name>
    <dbReference type="NCBI Taxonomy" id="39947"/>
    <lineage>
        <taxon>Eukaryota</taxon>
        <taxon>Viridiplantae</taxon>
        <taxon>Streptophyta</taxon>
        <taxon>Embryophyta</taxon>
        <taxon>Tracheophyta</taxon>
        <taxon>Spermatophyta</taxon>
        <taxon>Magnoliopsida</taxon>
        <taxon>Liliopsida</taxon>
        <taxon>Poales</taxon>
        <taxon>Poaceae</taxon>
        <taxon>BOP clade</taxon>
        <taxon>Oryzoideae</taxon>
        <taxon>Oryzeae</taxon>
        <taxon>Oryzinae</taxon>
        <taxon>Oryza</taxon>
        <taxon>Oryza sativa</taxon>
    </lineage>
</organism>
<accession>Q2QMW1</accession>
<accession>A0A0P0YBT3</accession>
<feature type="chain" id="PRO_0000287035" description="Cyclin-D5-2">
    <location>
        <begin position="1"/>
        <end position="365"/>
    </location>
</feature>
<feature type="sequence conflict" description="In Ref. 5; AK101602." evidence="1" ref="5">
    <original>E</original>
    <variation>K</variation>
    <location>
        <position position="53"/>
    </location>
</feature>
<name>CCD52_ORYSJ</name>
<evidence type="ECO:0000305" key="1"/>
<comment type="similarity">
    <text evidence="1">Belongs to the cyclin family. Cyclin D subfamily.</text>
</comment>
<protein>
    <recommendedName>
        <fullName>Cyclin-D5-2</fullName>
    </recommendedName>
    <alternativeName>
        <fullName>G1/S-specific cyclin-D5-2</fullName>
        <shortName>CycD5;2</shortName>
    </alternativeName>
</protein>
<sequence>MSMEEAEECSAACGFSLTCQEDGADLGDGVVDDDDDGDVFLFYNAVAAADDEEEEEEYVEQMVSKEASFCCSSSSSLFDAAAGDGYGDGDGDGDWFRQARLAAVKWILETRGYFGFGHRTAYLAIAYFDRFCLRRRVDREAMPWAARLLSIACVSVAAKMEEYQSPALSEFDAGGGRVFCSDSIRRMELLVLSTLGWRMGAVTPFDFLPCFSSRLHRHHHGGAGAAGHGAAAAARVALNAVGFIFATAEAGSVLDYRPSTVAAAAILAASYGAPLTKEALESKMSNLSPSCLIDKENVHACYSMMVGDMNNNRRSSKRPLQCSDSNEITTTSTYDSVLVDDVTDTAAFAATAMNKRLRPEPPRIR</sequence>
<dbReference type="EMBL" id="DP000011">
    <property type="protein sequence ID" value="ABA99754.1"/>
    <property type="molecule type" value="Genomic_DNA"/>
</dbReference>
<dbReference type="EMBL" id="AP008218">
    <property type="protein sequence ID" value="BAF30181.1"/>
    <property type="molecule type" value="Genomic_DNA"/>
</dbReference>
<dbReference type="EMBL" id="AP014968">
    <property type="protein sequence ID" value="BAT17864.1"/>
    <property type="molecule type" value="Genomic_DNA"/>
</dbReference>
<dbReference type="EMBL" id="AK101602">
    <property type="status" value="NOT_ANNOTATED_CDS"/>
    <property type="molecule type" value="mRNA"/>
</dbReference>
<dbReference type="RefSeq" id="XP_015619001.1">
    <property type="nucleotide sequence ID" value="XM_015763515.1"/>
</dbReference>
<dbReference type="SMR" id="Q2QMW1"/>
<dbReference type="FunCoup" id="Q2QMW1">
    <property type="interactions" value="277"/>
</dbReference>
<dbReference type="STRING" id="39947.Q2QMW1"/>
<dbReference type="PaxDb" id="39947-Q2QMW1"/>
<dbReference type="EnsemblPlants" id="Os12t0588800-01">
    <property type="protein sequence ID" value="Os12t0588800-01"/>
    <property type="gene ID" value="Os12g0588800"/>
</dbReference>
<dbReference type="Gramene" id="Os12t0588800-01">
    <property type="protein sequence ID" value="Os12t0588800-01"/>
    <property type="gene ID" value="Os12g0588800"/>
</dbReference>
<dbReference type="KEGG" id="dosa:Os12g0588800"/>
<dbReference type="eggNOG" id="KOG0656">
    <property type="taxonomic scope" value="Eukaryota"/>
</dbReference>
<dbReference type="HOGENOM" id="CLU_048040_4_0_1"/>
<dbReference type="InParanoid" id="Q2QMW1"/>
<dbReference type="OMA" id="ENVHACY"/>
<dbReference type="OrthoDB" id="306099at2759"/>
<dbReference type="Proteomes" id="UP000000763">
    <property type="component" value="Chromosome 12"/>
</dbReference>
<dbReference type="Proteomes" id="UP000059680">
    <property type="component" value="Chromosome 12"/>
</dbReference>
<dbReference type="GO" id="GO:0000307">
    <property type="term" value="C:cyclin-dependent protein kinase holoenzyme complex"/>
    <property type="evidence" value="ECO:0000318"/>
    <property type="project" value="GO_Central"/>
</dbReference>
<dbReference type="GO" id="GO:0005737">
    <property type="term" value="C:cytoplasm"/>
    <property type="evidence" value="ECO:0000318"/>
    <property type="project" value="GO_Central"/>
</dbReference>
<dbReference type="GO" id="GO:0005634">
    <property type="term" value="C:nucleus"/>
    <property type="evidence" value="ECO:0000318"/>
    <property type="project" value="GO_Central"/>
</dbReference>
<dbReference type="GO" id="GO:0016538">
    <property type="term" value="F:cyclin-dependent protein serine/threonine kinase regulator activity"/>
    <property type="evidence" value="ECO:0000318"/>
    <property type="project" value="GO_Central"/>
</dbReference>
<dbReference type="GO" id="GO:0051301">
    <property type="term" value="P:cell division"/>
    <property type="evidence" value="ECO:0007669"/>
    <property type="project" value="UniProtKB-KW"/>
</dbReference>
<dbReference type="GO" id="GO:0000082">
    <property type="term" value="P:G1/S transition of mitotic cell cycle"/>
    <property type="evidence" value="ECO:0000318"/>
    <property type="project" value="GO_Central"/>
</dbReference>
<dbReference type="CDD" id="cd20544">
    <property type="entry name" value="CYCLIN_AtCycD-like_rpt2"/>
    <property type="match status" value="1"/>
</dbReference>
<dbReference type="FunFam" id="1.10.472.10:FF:000069">
    <property type="entry name" value="Cyclin-D5-1"/>
    <property type="match status" value="1"/>
</dbReference>
<dbReference type="FunFam" id="1.10.472.10:FF:000107">
    <property type="entry name" value="Cyclin-D5-1"/>
    <property type="match status" value="1"/>
</dbReference>
<dbReference type="Gene3D" id="1.10.472.10">
    <property type="entry name" value="Cyclin-like"/>
    <property type="match status" value="2"/>
</dbReference>
<dbReference type="InterPro" id="IPR039361">
    <property type="entry name" value="Cyclin"/>
</dbReference>
<dbReference type="InterPro" id="IPR013763">
    <property type="entry name" value="Cyclin-like_dom"/>
</dbReference>
<dbReference type="InterPro" id="IPR036915">
    <property type="entry name" value="Cyclin-like_sf"/>
</dbReference>
<dbReference type="InterPro" id="IPR004367">
    <property type="entry name" value="Cyclin_C-dom"/>
</dbReference>
<dbReference type="InterPro" id="IPR006671">
    <property type="entry name" value="Cyclin_N"/>
</dbReference>
<dbReference type="InterPro" id="IPR048258">
    <property type="entry name" value="Cyclins_cyclin-box"/>
</dbReference>
<dbReference type="PANTHER" id="PTHR10177">
    <property type="entry name" value="CYCLINS"/>
    <property type="match status" value="1"/>
</dbReference>
<dbReference type="Pfam" id="PF02984">
    <property type="entry name" value="Cyclin_C"/>
    <property type="match status" value="1"/>
</dbReference>
<dbReference type="Pfam" id="PF00134">
    <property type="entry name" value="Cyclin_N"/>
    <property type="match status" value="1"/>
</dbReference>
<dbReference type="SMART" id="SM00385">
    <property type="entry name" value="CYCLIN"/>
    <property type="match status" value="1"/>
</dbReference>
<dbReference type="SUPFAM" id="SSF47954">
    <property type="entry name" value="Cyclin-like"/>
    <property type="match status" value="1"/>
</dbReference>
<dbReference type="PROSITE" id="PS00292">
    <property type="entry name" value="CYCLINS"/>
    <property type="match status" value="1"/>
</dbReference>
<proteinExistence type="evidence at transcript level"/>
<keyword id="KW-0131">Cell cycle</keyword>
<keyword id="KW-0132">Cell division</keyword>
<keyword id="KW-0195">Cyclin</keyword>
<keyword id="KW-1185">Reference proteome</keyword>